<accession>Q9ZF25</accession>
<organism>
    <name type="scientific">Enterobacter cloacae</name>
    <dbReference type="NCBI Taxonomy" id="550"/>
    <lineage>
        <taxon>Bacteria</taxon>
        <taxon>Pseudomonadati</taxon>
        <taxon>Pseudomonadota</taxon>
        <taxon>Gammaproteobacteria</taxon>
        <taxon>Enterobacterales</taxon>
        <taxon>Enterobacteriaceae</taxon>
        <taxon>Enterobacter</taxon>
        <taxon>Enterobacter cloacae complex</taxon>
    </lineage>
</organism>
<keyword id="KW-0024">Alternative initiation</keyword>
<keyword id="KW-0963">Cytoplasm</keyword>
<keyword id="KW-0342">GTP-binding</keyword>
<keyword id="KW-0396">Initiation factor</keyword>
<keyword id="KW-0547">Nucleotide-binding</keyword>
<keyword id="KW-0648">Protein biosynthesis</keyword>
<proteinExistence type="inferred from homology"/>
<reference key="1">
    <citation type="submission" date="1997-11" db="EMBL/GenBank/DDBJ databases">
        <title>Sequence of the infB gene from Enterobacter cloacae.</title>
        <authorList>
            <person name="Steffensen S.A.D.A."/>
            <person name="Poulsen A.B."/>
            <person name="Fage-Larsen J."/>
            <person name="Korsager B."/>
            <person name="Mortensen K.K."/>
            <person name="Sperling-Petersen H.U."/>
        </authorList>
    </citation>
    <scope>NUCLEOTIDE SEQUENCE [GENOMIC DNA]</scope>
    <source>
        <strain>EclAU9501</strain>
    </source>
</reference>
<dbReference type="EMBL" id="AJ002736">
    <property type="protein sequence ID" value="CAA05703.1"/>
    <property type="molecule type" value="Genomic_DNA"/>
</dbReference>
<dbReference type="EMBL" id="AJ002736">
    <property type="protein sequence ID" value="CAA05704.1"/>
    <property type="molecule type" value="Genomic_DNA"/>
</dbReference>
<dbReference type="EMBL" id="AJ002736">
    <property type="protein sequence ID" value="CAA05705.1"/>
    <property type="molecule type" value="Genomic_DNA"/>
</dbReference>
<dbReference type="SMR" id="Q9ZF25"/>
<dbReference type="eggNOG" id="COG0532">
    <property type="taxonomic scope" value="Bacteria"/>
</dbReference>
<dbReference type="GO" id="GO:0005829">
    <property type="term" value="C:cytosol"/>
    <property type="evidence" value="ECO:0007669"/>
    <property type="project" value="TreeGrafter"/>
</dbReference>
<dbReference type="GO" id="GO:0005525">
    <property type="term" value="F:GTP binding"/>
    <property type="evidence" value="ECO:0007669"/>
    <property type="project" value="UniProtKB-KW"/>
</dbReference>
<dbReference type="GO" id="GO:0003924">
    <property type="term" value="F:GTPase activity"/>
    <property type="evidence" value="ECO:0007669"/>
    <property type="project" value="UniProtKB-UniRule"/>
</dbReference>
<dbReference type="GO" id="GO:0097216">
    <property type="term" value="F:guanosine tetraphosphate binding"/>
    <property type="evidence" value="ECO:0007669"/>
    <property type="project" value="UniProtKB-ARBA"/>
</dbReference>
<dbReference type="GO" id="GO:0003743">
    <property type="term" value="F:translation initiation factor activity"/>
    <property type="evidence" value="ECO:0007669"/>
    <property type="project" value="UniProtKB-UniRule"/>
</dbReference>
<dbReference type="CDD" id="cd01887">
    <property type="entry name" value="IF2_eIF5B"/>
    <property type="match status" value="1"/>
</dbReference>
<dbReference type="CDD" id="cd03702">
    <property type="entry name" value="IF2_mtIF2_II"/>
    <property type="match status" value="1"/>
</dbReference>
<dbReference type="CDD" id="cd03692">
    <property type="entry name" value="mtIF2_IVc"/>
    <property type="match status" value="1"/>
</dbReference>
<dbReference type="FunFam" id="2.40.30.10:FF:000007">
    <property type="entry name" value="Translation initiation factor IF-2"/>
    <property type="match status" value="1"/>
</dbReference>
<dbReference type="FunFam" id="2.40.30.10:FF:000008">
    <property type="entry name" value="Translation initiation factor IF-2"/>
    <property type="match status" value="1"/>
</dbReference>
<dbReference type="FunFam" id="3.30.56.50:FF:000001">
    <property type="entry name" value="Translation initiation factor IF-2"/>
    <property type="match status" value="1"/>
</dbReference>
<dbReference type="FunFam" id="3.40.50.10050:FF:000001">
    <property type="entry name" value="Translation initiation factor IF-2"/>
    <property type="match status" value="1"/>
</dbReference>
<dbReference type="FunFam" id="3.40.50.300:FF:000019">
    <property type="entry name" value="Translation initiation factor IF-2"/>
    <property type="match status" value="1"/>
</dbReference>
<dbReference type="Gene3D" id="3.40.50.300">
    <property type="entry name" value="P-loop containing nucleotide triphosphate hydrolases"/>
    <property type="match status" value="1"/>
</dbReference>
<dbReference type="Gene3D" id="3.30.56.50">
    <property type="entry name" value="Putative DNA-binding domain, N-terminal subdomain of bacterial translation initiation factor IF2"/>
    <property type="match status" value="1"/>
</dbReference>
<dbReference type="Gene3D" id="2.40.30.10">
    <property type="entry name" value="Translation factors"/>
    <property type="match status" value="2"/>
</dbReference>
<dbReference type="Gene3D" id="3.40.50.10050">
    <property type="entry name" value="Translation initiation factor IF- 2, domain 3"/>
    <property type="match status" value="1"/>
</dbReference>
<dbReference type="HAMAP" id="MF_00100_B">
    <property type="entry name" value="IF_2_B"/>
    <property type="match status" value="1"/>
</dbReference>
<dbReference type="InterPro" id="IPR009061">
    <property type="entry name" value="DNA-bd_dom_put_sf"/>
</dbReference>
<dbReference type="InterPro" id="IPR053905">
    <property type="entry name" value="EF-G-like_DII"/>
</dbReference>
<dbReference type="InterPro" id="IPR004161">
    <property type="entry name" value="EFTu-like_2"/>
</dbReference>
<dbReference type="InterPro" id="IPR013575">
    <property type="entry name" value="IF2_assoc_dom_bac"/>
</dbReference>
<dbReference type="InterPro" id="IPR044145">
    <property type="entry name" value="IF2_II"/>
</dbReference>
<dbReference type="InterPro" id="IPR006847">
    <property type="entry name" value="IF2_N"/>
</dbReference>
<dbReference type="InterPro" id="IPR027417">
    <property type="entry name" value="P-loop_NTPase"/>
</dbReference>
<dbReference type="InterPro" id="IPR005225">
    <property type="entry name" value="Small_GTP-bd"/>
</dbReference>
<dbReference type="InterPro" id="IPR000795">
    <property type="entry name" value="T_Tr_GTP-bd_dom"/>
</dbReference>
<dbReference type="InterPro" id="IPR000178">
    <property type="entry name" value="TF_IF2_bacterial-like"/>
</dbReference>
<dbReference type="InterPro" id="IPR015760">
    <property type="entry name" value="TIF_IF2"/>
</dbReference>
<dbReference type="InterPro" id="IPR023115">
    <property type="entry name" value="TIF_IF2_dom3"/>
</dbReference>
<dbReference type="InterPro" id="IPR036925">
    <property type="entry name" value="TIF_IF2_dom3_sf"/>
</dbReference>
<dbReference type="InterPro" id="IPR009000">
    <property type="entry name" value="Transl_B-barrel_sf"/>
</dbReference>
<dbReference type="NCBIfam" id="TIGR00487">
    <property type="entry name" value="IF-2"/>
    <property type="match status" value="1"/>
</dbReference>
<dbReference type="NCBIfam" id="TIGR00231">
    <property type="entry name" value="small_GTP"/>
    <property type="match status" value="1"/>
</dbReference>
<dbReference type="PANTHER" id="PTHR43381:SF5">
    <property type="entry name" value="TR-TYPE G DOMAIN-CONTAINING PROTEIN"/>
    <property type="match status" value="1"/>
</dbReference>
<dbReference type="PANTHER" id="PTHR43381">
    <property type="entry name" value="TRANSLATION INITIATION FACTOR IF-2-RELATED"/>
    <property type="match status" value="1"/>
</dbReference>
<dbReference type="Pfam" id="PF22042">
    <property type="entry name" value="EF-G_D2"/>
    <property type="match status" value="1"/>
</dbReference>
<dbReference type="Pfam" id="PF00009">
    <property type="entry name" value="GTP_EFTU"/>
    <property type="match status" value="1"/>
</dbReference>
<dbReference type="Pfam" id="PF03144">
    <property type="entry name" value="GTP_EFTU_D2"/>
    <property type="match status" value="1"/>
</dbReference>
<dbReference type="Pfam" id="PF11987">
    <property type="entry name" value="IF-2"/>
    <property type="match status" value="1"/>
</dbReference>
<dbReference type="Pfam" id="PF08364">
    <property type="entry name" value="IF2_assoc"/>
    <property type="match status" value="1"/>
</dbReference>
<dbReference type="Pfam" id="PF04760">
    <property type="entry name" value="IF2_N"/>
    <property type="match status" value="2"/>
</dbReference>
<dbReference type="SUPFAM" id="SSF52156">
    <property type="entry name" value="Initiation factor IF2/eIF5b, domain 3"/>
    <property type="match status" value="1"/>
</dbReference>
<dbReference type="SUPFAM" id="SSF52540">
    <property type="entry name" value="P-loop containing nucleoside triphosphate hydrolases"/>
    <property type="match status" value="1"/>
</dbReference>
<dbReference type="SUPFAM" id="SSF46955">
    <property type="entry name" value="Putative DNA-binding domain"/>
    <property type="match status" value="1"/>
</dbReference>
<dbReference type="SUPFAM" id="SSF50447">
    <property type="entry name" value="Translation proteins"/>
    <property type="match status" value="2"/>
</dbReference>
<dbReference type="PROSITE" id="PS51722">
    <property type="entry name" value="G_TR_2"/>
    <property type="match status" value="1"/>
</dbReference>
<dbReference type="PROSITE" id="PS01176">
    <property type="entry name" value="IF2"/>
    <property type="match status" value="1"/>
</dbReference>
<comment type="function">
    <text evidence="1">One of the essential components for the initiation of protein synthesis. Protects formylmethionyl-tRNA from spontaneous hydrolysis and promotes its binding to the 30S ribosomal subunits. Also involved in the hydrolysis of GTP during the formation of the 70S ribosomal complex (By similarity).</text>
</comment>
<comment type="subcellular location">
    <subcellularLocation>
        <location evidence="1">Cytoplasm</location>
    </subcellularLocation>
</comment>
<comment type="alternative products">
    <event type="alternative initiation"/>
    <isoform>
        <id>Q9ZF25-1</id>
        <name>Alpha</name>
        <sequence type="displayed"/>
    </isoform>
    <isoform>
        <id>Q9ZF25-2</id>
        <name>Beta</name>
        <sequence type="described" ref="VSP_018756 VSP_018757"/>
    </isoform>
    <isoform>
        <id>Q9ZF25-3</id>
        <name>Gamma</name>
        <sequence type="described" ref="VSP_018755"/>
    </isoform>
</comment>
<comment type="similarity">
    <text evidence="3">Belongs to the TRAFAC class translation factor GTPase superfamily. Classic translation factor GTPase family. IF-2 subfamily.</text>
</comment>
<gene>
    <name type="primary">infB</name>
</gene>
<protein>
    <recommendedName>
        <fullName>Translation initiation factor IF-2</fullName>
    </recommendedName>
</protein>
<name>IF2_ENTCL</name>
<evidence type="ECO:0000250" key="1"/>
<evidence type="ECO:0000256" key="2">
    <source>
        <dbReference type="SAM" id="MobiDB-lite"/>
    </source>
</evidence>
<evidence type="ECO:0000305" key="3"/>
<feature type="chain" id="PRO_0000014466" description="Translation initiation factor IF-2">
    <location>
        <begin position="1"/>
        <end position="897"/>
    </location>
</feature>
<feature type="domain" description="tr-type G">
    <location>
        <begin position="396"/>
        <end position="565"/>
    </location>
</feature>
<feature type="region of interest" description="Disordered" evidence="2">
    <location>
        <begin position="52"/>
        <end position="310"/>
    </location>
</feature>
<feature type="region of interest" description="G1" evidence="1">
    <location>
        <begin position="405"/>
        <end position="412"/>
    </location>
</feature>
<feature type="region of interest" description="G2" evidence="1">
    <location>
        <begin position="430"/>
        <end position="434"/>
    </location>
</feature>
<feature type="region of interest" description="G3" evidence="1">
    <location>
        <begin position="451"/>
        <end position="454"/>
    </location>
</feature>
<feature type="region of interest" description="G4" evidence="1">
    <location>
        <begin position="505"/>
        <end position="508"/>
    </location>
</feature>
<feature type="region of interest" description="G5" evidence="1">
    <location>
        <begin position="541"/>
        <end position="543"/>
    </location>
</feature>
<feature type="compositionally biased region" description="Polar residues" evidence="2">
    <location>
        <begin position="68"/>
        <end position="82"/>
    </location>
</feature>
<feature type="compositionally biased region" description="Basic and acidic residues" evidence="2">
    <location>
        <begin position="85"/>
        <end position="159"/>
    </location>
</feature>
<feature type="compositionally biased region" description="Basic and acidic residues" evidence="2">
    <location>
        <begin position="166"/>
        <end position="217"/>
    </location>
</feature>
<feature type="compositionally biased region" description="Basic residues" evidence="2">
    <location>
        <begin position="256"/>
        <end position="272"/>
    </location>
</feature>
<feature type="compositionally biased region" description="Basic and acidic residues" evidence="2">
    <location>
        <begin position="273"/>
        <end position="286"/>
    </location>
</feature>
<feature type="binding site" evidence="1">
    <location>
        <begin position="405"/>
        <end position="412"/>
    </location>
    <ligand>
        <name>GTP</name>
        <dbReference type="ChEBI" id="CHEBI:37565"/>
    </ligand>
</feature>
<feature type="binding site" evidence="1">
    <location>
        <begin position="451"/>
        <end position="455"/>
    </location>
    <ligand>
        <name>GTP</name>
        <dbReference type="ChEBI" id="CHEBI:37565"/>
    </ligand>
</feature>
<feature type="binding site" evidence="1">
    <location>
        <begin position="505"/>
        <end position="508"/>
    </location>
    <ligand>
        <name>GTP</name>
        <dbReference type="ChEBI" id="CHEBI:37565"/>
    </ligand>
</feature>
<feature type="splice variant" id="VSP_018755" description="In isoform Gamma." evidence="3">
    <location>
        <begin position="1"/>
        <end position="166"/>
    </location>
</feature>
<feature type="splice variant" id="VSP_018756" description="In isoform Beta." evidence="3">
    <location>
        <begin position="1"/>
        <end position="158"/>
    </location>
</feature>
<feature type="splice variant" id="VSP_018757" description="In isoform Beta." evidence="3">
    <original>V</original>
    <variation>M</variation>
    <location>
        <position position="159"/>
    </location>
</feature>
<sequence length="897" mass="97893">MTDVTVKTLAAEIQTSVDRLVQQFADAGIPKSADDSVTAQEKQTLLSHLNREHGSAPDKLTLQRKTRSTLNVPGTGGKSKSVQIEVRKTRTFVKRDPQEAERLAAEEQAQREAEEQAQREAEITAKREAELKAEREAAEKAKRDASDKAKRDAAEKDKVSNQQTDEMTKTAQTEKARRENEAAELKRKAEEEARRKLEEDARRVAEEARRMAEENEKNGINPVEQTEDTSDYHVTTSQHARQAEDENDREVEGGRGRTRTASKTARPQKKGNKHAESKADREEARAAGRGGKGGKRKGSPLLQQGFQKPAQAVNRDVVIGETITVGDLANKMAVKGSQVIKAMMKLGAMATINQVIDQETAQLVAEEMGHKVILRRENELEEAVMSDRDTGAAAEPRAPVVTIMGHVDHGKTSLLDYIRSTKVASGEAGGITQHIGAYHVETDNGMITFLDTPGHAAFTSMRARGAQATDIVVLVVAADDGVMPQTIEAIQHAKAAQVPLVVAVNKIDKPEADMDRVKNELSQYGVMPEEWGGEAQFIPVSAKAGTGIDDLLNAILLQAEVLELKAIRNGMASGAVIESFLDKGRGPVATVLVREGTLNKGDIVLCGFEYGRVRAMRNELGQEVLEAGPSIPVEILGLSGVPAAGDEVTVVRDEKKAREVALYRQGKFREVKLARQQKSKLENMFANMTEGEVHEVNVVLKADVQGSVEAISDSLLKLSTDEVKVKIIGSGVGGITETDATLAAASNAILVGFNVRADASARKVIESESLDLRYYSVIYNLIDEVKAAMSGMLSPELKQQIIGLAEVRDVFKSPKFGAIAGCMVTEGNIKRHNPIRVLRDNVVIYEGELESLRRFKDDVNEVRNGMECGIGVKNYNDVRVGDMIEVFEIIEIQRTIA</sequence>